<gene>
    <name type="primary">stas</name>
    <name type="ORF">CG8408</name>
</gene>
<dbReference type="EMBL" id="AE014298">
    <property type="protein sequence ID" value="AAF48742.2"/>
    <property type="molecule type" value="Genomic_DNA"/>
</dbReference>
<dbReference type="EMBL" id="AE014298">
    <property type="protein sequence ID" value="ACL82947.1"/>
    <property type="molecule type" value="Genomic_DNA"/>
</dbReference>
<dbReference type="EMBL" id="AY061150">
    <property type="protein sequence ID" value="AAL28698.1"/>
    <property type="molecule type" value="mRNA"/>
</dbReference>
<dbReference type="RefSeq" id="NP_001138217.1">
    <molecule id="Q9VX39-2"/>
    <property type="nucleotide sequence ID" value="NM_001144745.2"/>
</dbReference>
<dbReference type="RefSeq" id="NP_573225.1">
    <molecule id="Q9VX39-1"/>
    <property type="nucleotide sequence ID" value="NM_132997.3"/>
</dbReference>
<dbReference type="SMR" id="Q9VX39"/>
<dbReference type="BioGRID" id="59063">
    <property type="interactions" value="14"/>
</dbReference>
<dbReference type="FunCoup" id="Q9VX39">
    <property type="interactions" value="1423"/>
</dbReference>
<dbReference type="IntAct" id="Q9VX39">
    <property type="interactions" value="13"/>
</dbReference>
<dbReference type="STRING" id="7227.FBpp0074261"/>
<dbReference type="TCDB" id="9.B.27.1.10">
    <property type="family name" value="the death effector domain a (deda) family"/>
</dbReference>
<dbReference type="PaxDb" id="7227-FBpp0074261"/>
<dbReference type="DNASU" id="32737"/>
<dbReference type="EnsemblMetazoa" id="FBtr0074487">
    <molecule id="Q9VX39-1"/>
    <property type="protein sequence ID" value="FBpp0074261"/>
    <property type="gene ID" value="FBgn0030850"/>
</dbReference>
<dbReference type="EnsemblMetazoa" id="FBtr0290036">
    <molecule id="Q9VX39-2"/>
    <property type="protein sequence ID" value="FBpp0288475"/>
    <property type="gene ID" value="FBgn0030850"/>
</dbReference>
<dbReference type="GeneID" id="32737"/>
<dbReference type="KEGG" id="dme:Dmel_CG8408"/>
<dbReference type="UCSC" id="CG8408-RA">
    <molecule id="Q9VX39-1"/>
    <property type="organism name" value="d. melanogaster"/>
</dbReference>
<dbReference type="AGR" id="FB:FBgn0030850"/>
<dbReference type="CTD" id="32737"/>
<dbReference type="FlyBase" id="FBgn0030850">
    <property type="gene designation" value="stas"/>
</dbReference>
<dbReference type="VEuPathDB" id="VectorBase:FBgn0030850"/>
<dbReference type="eggNOG" id="KOG3140">
    <property type="taxonomic scope" value="Eukaryota"/>
</dbReference>
<dbReference type="GeneTree" id="ENSGT00940000156956"/>
<dbReference type="HOGENOM" id="CLU_038944_0_1_1"/>
<dbReference type="InParanoid" id="Q9VX39"/>
<dbReference type="OMA" id="CIKIPRD"/>
<dbReference type="OrthoDB" id="3364966at2759"/>
<dbReference type="PhylomeDB" id="Q9VX39"/>
<dbReference type="BioGRID-ORCS" id="32737">
    <property type="hits" value="0 hits in 3 CRISPR screens"/>
</dbReference>
<dbReference type="GenomeRNAi" id="32737"/>
<dbReference type="PRO" id="PR:Q9VX39"/>
<dbReference type="Proteomes" id="UP000000803">
    <property type="component" value="Chromosome X"/>
</dbReference>
<dbReference type="Bgee" id="FBgn0030850">
    <property type="expression patterns" value="Expressed in adult oenocyte (Drosophila) in body wall and 254 other cell types or tissues"/>
</dbReference>
<dbReference type="GO" id="GO:0005789">
    <property type="term" value="C:endoplasmic reticulum membrane"/>
    <property type="evidence" value="ECO:0000318"/>
    <property type="project" value="GO_Central"/>
</dbReference>
<dbReference type="GO" id="GO:0000045">
    <property type="term" value="P:autophagosome assembly"/>
    <property type="evidence" value="ECO:0000318"/>
    <property type="project" value="GO_Central"/>
</dbReference>
<dbReference type="GO" id="GO:0007399">
    <property type="term" value="P:nervous system development"/>
    <property type="evidence" value="ECO:0007669"/>
    <property type="project" value="UniProtKB-KW"/>
</dbReference>
<dbReference type="GO" id="GO:0032224">
    <property type="term" value="P:positive regulation of synaptic transmission, cholinergic"/>
    <property type="evidence" value="ECO:0000315"/>
    <property type="project" value="FlyBase"/>
</dbReference>
<dbReference type="InterPro" id="IPR045014">
    <property type="entry name" value="TM41A/B"/>
</dbReference>
<dbReference type="InterPro" id="IPR032816">
    <property type="entry name" value="VTT_dom"/>
</dbReference>
<dbReference type="PANTHER" id="PTHR43220">
    <property type="match status" value="1"/>
</dbReference>
<dbReference type="PANTHER" id="PTHR43220:SF18">
    <property type="entry name" value="TRANSMEMBRANE PROTEIN 41B"/>
    <property type="match status" value="1"/>
</dbReference>
<dbReference type="Pfam" id="PF09335">
    <property type="entry name" value="VTT_dom"/>
    <property type="match status" value="1"/>
</dbReference>
<reference key="1">
    <citation type="journal article" date="2000" name="Science">
        <title>The genome sequence of Drosophila melanogaster.</title>
        <authorList>
            <person name="Adams M.D."/>
            <person name="Celniker S.E."/>
            <person name="Holt R.A."/>
            <person name="Evans C.A."/>
            <person name="Gocayne J.D."/>
            <person name="Amanatides P.G."/>
            <person name="Scherer S.E."/>
            <person name="Li P.W."/>
            <person name="Hoskins R.A."/>
            <person name="Galle R.F."/>
            <person name="George R.A."/>
            <person name="Lewis S.E."/>
            <person name="Richards S."/>
            <person name="Ashburner M."/>
            <person name="Henderson S.N."/>
            <person name="Sutton G.G."/>
            <person name="Wortman J.R."/>
            <person name="Yandell M.D."/>
            <person name="Zhang Q."/>
            <person name="Chen L.X."/>
            <person name="Brandon R.C."/>
            <person name="Rogers Y.-H.C."/>
            <person name="Blazej R.G."/>
            <person name="Champe M."/>
            <person name="Pfeiffer B.D."/>
            <person name="Wan K.H."/>
            <person name="Doyle C."/>
            <person name="Baxter E.G."/>
            <person name="Helt G."/>
            <person name="Nelson C.R."/>
            <person name="Miklos G.L.G."/>
            <person name="Abril J.F."/>
            <person name="Agbayani A."/>
            <person name="An H.-J."/>
            <person name="Andrews-Pfannkoch C."/>
            <person name="Baldwin D."/>
            <person name="Ballew R.M."/>
            <person name="Basu A."/>
            <person name="Baxendale J."/>
            <person name="Bayraktaroglu L."/>
            <person name="Beasley E.M."/>
            <person name="Beeson K.Y."/>
            <person name="Benos P.V."/>
            <person name="Berman B.P."/>
            <person name="Bhandari D."/>
            <person name="Bolshakov S."/>
            <person name="Borkova D."/>
            <person name="Botchan M.R."/>
            <person name="Bouck J."/>
            <person name="Brokstein P."/>
            <person name="Brottier P."/>
            <person name="Burtis K.C."/>
            <person name="Busam D.A."/>
            <person name="Butler H."/>
            <person name="Cadieu E."/>
            <person name="Center A."/>
            <person name="Chandra I."/>
            <person name="Cherry J.M."/>
            <person name="Cawley S."/>
            <person name="Dahlke C."/>
            <person name="Davenport L.B."/>
            <person name="Davies P."/>
            <person name="de Pablos B."/>
            <person name="Delcher A."/>
            <person name="Deng Z."/>
            <person name="Mays A.D."/>
            <person name="Dew I."/>
            <person name="Dietz S.M."/>
            <person name="Dodson K."/>
            <person name="Doup L.E."/>
            <person name="Downes M."/>
            <person name="Dugan-Rocha S."/>
            <person name="Dunkov B.C."/>
            <person name="Dunn P."/>
            <person name="Durbin K.J."/>
            <person name="Evangelista C.C."/>
            <person name="Ferraz C."/>
            <person name="Ferriera S."/>
            <person name="Fleischmann W."/>
            <person name="Fosler C."/>
            <person name="Gabrielian A.E."/>
            <person name="Garg N.S."/>
            <person name="Gelbart W.M."/>
            <person name="Glasser K."/>
            <person name="Glodek A."/>
            <person name="Gong F."/>
            <person name="Gorrell J.H."/>
            <person name="Gu Z."/>
            <person name="Guan P."/>
            <person name="Harris M."/>
            <person name="Harris N.L."/>
            <person name="Harvey D.A."/>
            <person name="Heiman T.J."/>
            <person name="Hernandez J.R."/>
            <person name="Houck J."/>
            <person name="Hostin D."/>
            <person name="Houston K.A."/>
            <person name="Howland T.J."/>
            <person name="Wei M.-H."/>
            <person name="Ibegwam C."/>
            <person name="Jalali M."/>
            <person name="Kalush F."/>
            <person name="Karpen G.H."/>
            <person name="Ke Z."/>
            <person name="Kennison J.A."/>
            <person name="Ketchum K.A."/>
            <person name="Kimmel B.E."/>
            <person name="Kodira C.D."/>
            <person name="Kraft C.L."/>
            <person name="Kravitz S."/>
            <person name="Kulp D."/>
            <person name="Lai Z."/>
            <person name="Lasko P."/>
            <person name="Lei Y."/>
            <person name="Levitsky A.A."/>
            <person name="Li J.H."/>
            <person name="Li Z."/>
            <person name="Liang Y."/>
            <person name="Lin X."/>
            <person name="Liu X."/>
            <person name="Mattei B."/>
            <person name="McIntosh T.C."/>
            <person name="McLeod M.P."/>
            <person name="McPherson D."/>
            <person name="Merkulov G."/>
            <person name="Milshina N.V."/>
            <person name="Mobarry C."/>
            <person name="Morris J."/>
            <person name="Moshrefi A."/>
            <person name="Mount S.M."/>
            <person name="Moy M."/>
            <person name="Murphy B."/>
            <person name="Murphy L."/>
            <person name="Muzny D.M."/>
            <person name="Nelson D.L."/>
            <person name="Nelson D.R."/>
            <person name="Nelson K.A."/>
            <person name="Nixon K."/>
            <person name="Nusskern D.R."/>
            <person name="Pacleb J.M."/>
            <person name="Palazzolo M."/>
            <person name="Pittman G.S."/>
            <person name="Pan S."/>
            <person name="Pollard J."/>
            <person name="Puri V."/>
            <person name="Reese M.G."/>
            <person name="Reinert K."/>
            <person name="Remington K."/>
            <person name="Saunders R.D.C."/>
            <person name="Scheeler F."/>
            <person name="Shen H."/>
            <person name="Shue B.C."/>
            <person name="Siden-Kiamos I."/>
            <person name="Simpson M."/>
            <person name="Skupski M.P."/>
            <person name="Smith T.J."/>
            <person name="Spier E."/>
            <person name="Spradling A.C."/>
            <person name="Stapleton M."/>
            <person name="Strong R."/>
            <person name="Sun E."/>
            <person name="Svirskas R."/>
            <person name="Tector C."/>
            <person name="Turner R."/>
            <person name="Venter E."/>
            <person name="Wang A.H."/>
            <person name="Wang X."/>
            <person name="Wang Z.-Y."/>
            <person name="Wassarman D.A."/>
            <person name="Weinstock G.M."/>
            <person name="Weissenbach J."/>
            <person name="Williams S.M."/>
            <person name="Woodage T."/>
            <person name="Worley K.C."/>
            <person name="Wu D."/>
            <person name="Yang S."/>
            <person name="Yao Q.A."/>
            <person name="Ye J."/>
            <person name="Yeh R.-F."/>
            <person name="Zaveri J.S."/>
            <person name="Zhan M."/>
            <person name="Zhang G."/>
            <person name="Zhao Q."/>
            <person name="Zheng L."/>
            <person name="Zheng X.H."/>
            <person name="Zhong F.N."/>
            <person name="Zhong W."/>
            <person name="Zhou X."/>
            <person name="Zhu S.C."/>
            <person name="Zhu X."/>
            <person name="Smith H.O."/>
            <person name="Gibbs R.A."/>
            <person name="Myers E.W."/>
            <person name="Rubin G.M."/>
            <person name="Venter J.C."/>
        </authorList>
    </citation>
    <scope>NUCLEOTIDE SEQUENCE [LARGE SCALE GENOMIC DNA]</scope>
    <source>
        <strain>Berkeley</strain>
    </source>
</reference>
<reference key="2">
    <citation type="journal article" date="2002" name="Genome Biol.">
        <title>Annotation of the Drosophila melanogaster euchromatic genome: a systematic review.</title>
        <authorList>
            <person name="Misra S."/>
            <person name="Crosby M.A."/>
            <person name="Mungall C.J."/>
            <person name="Matthews B.B."/>
            <person name="Campbell K.S."/>
            <person name="Hradecky P."/>
            <person name="Huang Y."/>
            <person name="Kaminker J.S."/>
            <person name="Millburn G.H."/>
            <person name="Prochnik S.E."/>
            <person name="Smith C.D."/>
            <person name="Tupy J.L."/>
            <person name="Whitfield E.J."/>
            <person name="Bayraktaroglu L."/>
            <person name="Berman B.P."/>
            <person name="Bettencourt B.R."/>
            <person name="Celniker S.E."/>
            <person name="de Grey A.D.N.J."/>
            <person name="Drysdale R.A."/>
            <person name="Harris N.L."/>
            <person name="Richter J."/>
            <person name="Russo S."/>
            <person name="Schroeder A.J."/>
            <person name="Shu S.Q."/>
            <person name="Stapleton M."/>
            <person name="Yamada C."/>
            <person name="Ashburner M."/>
            <person name="Gelbart W.M."/>
            <person name="Rubin G.M."/>
            <person name="Lewis S.E."/>
        </authorList>
    </citation>
    <scope>GENOME REANNOTATION</scope>
    <source>
        <strain>Berkeley</strain>
    </source>
</reference>
<reference key="3">
    <citation type="journal article" date="2002" name="Genome Biol.">
        <title>A Drosophila full-length cDNA resource.</title>
        <authorList>
            <person name="Stapleton M."/>
            <person name="Carlson J.W."/>
            <person name="Brokstein P."/>
            <person name="Yu C."/>
            <person name="Champe M."/>
            <person name="George R.A."/>
            <person name="Guarin H."/>
            <person name="Kronmiller B."/>
            <person name="Pacleb J.M."/>
            <person name="Park S."/>
            <person name="Wan K.H."/>
            <person name="Rubin G.M."/>
            <person name="Celniker S.E."/>
        </authorList>
    </citation>
    <scope>NUCLEOTIDE SEQUENCE [LARGE SCALE MRNA] (ISOFORM A)</scope>
    <source>
        <strain>Berkeley</strain>
        <tissue>Embryo</tissue>
    </source>
</reference>
<reference key="4">
    <citation type="journal article" date="2012" name="Cell">
        <title>An SMN-dependent U12 splicing event essential for motor circuit function.</title>
        <authorList>
            <person name="Lotti F."/>
            <person name="Imlach W.L."/>
            <person name="Saieva L."/>
            <person name="Beck E.S."/>
            <person name="Hao le T."/>
            <person name="Li D.K."/>
            <person name="Jiao W."/>
            <person name="Mentis G.Z."/>
            <person name="Beattie C.E."/>
            <person name="McCabe B.D."/>
            <person name="Pellizzoni L."/>
        </authorList>
    </citation>
    <scope>FUNCTION</scope>
    <scope>TISSUE SPECIFICITY</scope>
</reference>
<protein>
    <recommendedName>
        <fullName>Transmembrane protein 41 homolog</fullName>
    </recommendedName>
    <alternativeName>
        <fullName>Protein stasimon</fullName>
    </alternativeName>
</protein>
<organism>
    <name type="scientific">Drosophila melanogaster</name>
    <name type="common">Fruit fly</name>
    <dbReference type="NCBI Taxonomy" id="7227"/>
    <lineage>
        <taxon>Eukaryota</taxon>
        <taxon>Metazoa</taxon>
        <taxon>Ecdysozoa</taxon>
        <taxon>Arthropoda</taxon>
        <taxon>Hexapoda</taxon>
        <taxon>Insecta</taxon>
        <taxon>Pterygota</taxon>
        <taxon>Neoptera</taxon>
        <taxon>Endopterygota</taxon>
        <taxon>Diptera</taxon>
        <taxon>Brachycera</taxon>
        <taxon>Muscomorpha</taxon>
        <taxon>Ephydroidea</taxon>
        <taxon>Drosophilidae</taxon>
        <taxon>Drosophila</taxon>
        <taxon>Sophophora</taxon>
    </lineage>
</organism>
<evidence type="ECO:0000255" key="1"/>
<evidence type="ECO:0000256" key="2">
    <source>
        <dbReference type="SAM" id="MobiDB-lite"/>
    </source>
</evidence>
<evidence type="ECO:0000269" key="3">
    <source>
    </source>
</evidence>
<evidence type="ECO:0000305" key="4"/>
<feature type="chain" id="PRO_0000291946" description="Transmembrane protein 41 homolog">
    <location>
        <begin position="1"/>
        <end position="320"/>
    </location>
</feature>
<feature type="transmembrane region" description="Helical" evidence="1">
    <location>
        <begin position="83"/>
        <end position="103"/>
    </location>
</feature>
<feature type="transmembrane region" description="Helical" evidence="1">
    <location>
        <begin position="141"/>
        <end position="161"/>
    </location>
</feature>
<feature type="transmembrane region" description="Helical" evidence="1">
    <location>
        <begin position="173"/>
        <end position="195"/>
    </location>
</feature>
<feature type="transmembrane region" description="Helical" evidence="1">
    <location>
        <begin position="225"/>
        <end position="242"/>
    </location>
</feature>
<feature type="transmembrane region" description="Helical" evidence="1">
    <location>
        <begin position="245"/>
        <end position="265"/>
    </location>
</feature>
<feature type="transmembrane region" description="Helical" evidence="1">
    <location>
        <begin position="289"/>
        <end position="309"/>
    </location>
</feature>
<feature type="region of interest" description="Disordered" evidence="2">
    <location>
        <begin position="20"/>
        <end position="72"/>
    </location>
</feature>
<feature type="compositionally biased region" description="Low complexity" evidence="2">
    <location>
        <begin position="43"/>
        <end position="68"/>
    </location>
</feature>
<feature type="splice variant" id="VSP_053425" description="In isoform B." evidence="4">
    <original>FLQTFAIPGSLFLSILLGFLYKFP</original>
    <variation>LYPFTKSKSTNPKYEKWHEKSVAD</variation>
    <location>
        <begin position="151"/>
        <end position="174"/>
    </location>
</feature>
<feature type="splice variant" id="VSP_053426" description="In isoform B." evidence="4">
    <location>
        <begin position="175"/>
        <end position="320"/>
    </location>
</feature>
<name>TM41_DROME</name>
<comment type="function">
    <text evidence="3">Required in cholinergic neurons, but not in motor neurons, for normal neurotransmitter release by motor neurons. Involved in muscle growth.</text>
</comment>
<comment type="subcellular location">
    <subcellularLocation>
        <location evidence="4">Membrane</location>
        <topology evidence="4">Multi-pass membrane protein</topology>
    </subcellularLocation>
</comment>
<comment type="alternative products">
    <event type="alternative splicing"/>
    <isoform>
        <id>Q9VX39-1</id>
        <name>A</name>
        <sequence type="displayed"/>
    </isoform>
    <isoform>
        <id>Q9VX39-2</id>
        <name>B</name>
        <sequence type="described" ref="VSP_053425 VSP_053426"/>
    </isoform>
</comment>
<comment type="tissue specificity">
    <text evidence="3">In embryos, strongly expressed in the nervous system.</text>
</comment>
<comment type="similarity">
    <text evidence="4">Belongs to the TMEM41 family.</text>
</comment>
<accession>Q9VX39</accession>
<accession>B7Z102</accession>
<accession>Q95RT5</accession>
<keyword id="KW-0025">Alternative splicing</keyword>
<keyword id="KW-0472">Membrane</keyword>
<keyword id="KW-0524">Neurogenesis</keyword>
<keyword id="KW-1185">Reference proteome</keyword>
<keyword id="KW-0812">Transmembrane</keyword>
<keyword id="KW-1133">Transmembrane helix</keyword>
<sequence>MSYCSGVAISADEGITMRNGRAKALQEHSPDQVATPLLPQVPPQEQQDLNPQQQQQQQQQQQATPQKQAMSADEKKATKKSLVIVAGIFVASLVTMCYVYAIFPELNASEKQHLKIPRDIQDAKMLAKVLDRYKDMYYFEVMFGVVVAYVFLQTFAIPGSLFLSILLGFLYKFPIALFLICFCSALGATLCYTLSNLVGRRLIRHFWPKKTSEWSKHVEEYRDSLFNYMLFLRMTPILPNWFINLASPVIGVPLHIFALGTFCGVAPPSVIAIQAGKTLQKMTSSSEAFSWTSMGILMACACASLLPGLLKNKFKHKKEA</sequence>
<proteinExistence type="evidence at transcript level"/>